<name>D7R1_ANOGA</name>
<sequence length="165" mass="18666">MFNKLHLVSLLACGLFVIAQANTVKKCEKKMPASLKSQLCEIRKYKLLDTPDMDKHMDCVMKALDFVRPDGTGDYHKLIKPLNAIEKDRKHDFNLEKCGGQTQHLPVGKRANAYYKCLVESTSGDAFKKVFDTVELVKAKKLPALSQYSSVVDKLMKKIDDKICN</sequence>
<proteinExistence type="evidence at transcript level"/>
<evidence type="ECO:0000250" key="1">
    <source>
        <dbReference type="UniProtKB" id="P18153"/>
    </source>
</evidence>
<evidence type="ECO:0000250" key="2">
    <source>
        <dbReference type="UniProtKB" id="Q7PNF2"/>
    </source>
</evidence>
<evidence type="ECO:0000255" key="3"/>
<evidence type="ECO:0000269" key="4">
    <source>
    </source>
</evidence>
<evidence type="ECO:0000269" key="5">
    <source>
    </source>
</evidence>
<evidence type="ECO:0000269" key="6">
    <source>
    </source>
</evidence>
<evidence type="ECO:0000303" key="7">
    <source>
    </source>
</evidence>
<evidence type="ECO:0000303" key="8">
    <source>
    </source>
</evidence>
<evidence type="ECO:0000305" key="9"/>
<evidence type="ECO:0000312" key="10">
    <source>
        <dbReference type="EMBL" id="AAK84942.1"/>
    </source>
</evidence>
<evidence type="ECO:0000312" key="11">
    <source>
        <dbReference type="EMBL" id="CAA76823.1"/>
    </source>
</evidence>
<evidence type="ECO:0000312" key="12">
    <source>
        <dbReference type="EMBL" id="CAB39727.1"/>
    </source>
</evidence>
<feature type="signal peptide" evidence="3">
    <location>
        <begin position="1"/>
        <end position="21"/>
    </location>
</feature>
<feature type="chain" id="PRO_5010148872" description="Short form salivary protein D7R1" evidence="3">
    <location>
        <begin position="22"/>
        <end position="165"/>
    </location>
</feature>
<feature type="binding site" evidence="2">
    <location>
        <position position="28"/>
    </location>
    <ligand>
        <name>serotonin</name>
        <dbReference type="ChEBI" id="CHEBI:350546"/>
    </ligand>
</feature>
<feature type="binding site" evidence="2">
    <location>
        <position position="56"/>
    </location>
    <ligand>
        <name>serotonin</name>
        <dbReference type="ChEBI" id="CHEBI:350546"/>
    </ligand>
</feature>
<feature type="binding site" evidence="2">
    <location>
        <position position="115"/>
    </location>
    <ligand>
        <name>histamine</name>
        <dbReference type="ChEBI" id="CHEBI:58432"/>
    </ligand>
</feature>
<feature type="binding site" evidence="2">
    <location>
        <position position="115"/>
    </location>
    <ligand>
        <name>serotonin</name>
        <dbReference type="ChEBI" id="CHEBI:350546"/>
    </ligand>
</feature>
<feature type="binding site" evidence="2">
    <location>
        <position position="132"/>
    </location>
    <ligand>
        <name>histamine</name>
        <dbReference type="ChEBI" id="CHEBI:58432"/>
    </ligand>
</feature>
<feature type="binding site" evidence="2">
    <location>
        <position position="132"/>
    </location>
    <ligand>
        <name>serotonin</name>
        <dbReference type="ChEBI" id="CHEBI:350546"/>
    </ligand>
</feature>
<feature type="binding site" evidence="2">
    <location>
        <position position="135"/>
    </location>
    <ligand>
        <name>histamine</name>
        <dbReference type="ChEBI" id="CHEBI:58432"/>
    </ligand>
</feature>
<feature type="binding site" evidence="2">
    <location>
        <position position="135"/>
    </location>
    <ligand>
        <name>serotonin</name>
        <dbReference type="ChEBI" id="CHEBI:350546"/>
    </ligand>
</feature>
<feature type="disulfide bond" evidence="2">
    <location>
        <begin position="27"/>
        <end position="59"/>
    </location>
</feature>
<feature type="disulfide bond" evidence="2">
    <location>
        <begin position="40"/>
        <end position="164"/>
    </location>
</feature>
<feature type="disulfide bond" evidence="2">
    <location>
        <begin position="98"/>
        <end position="117"/>
    </location>
</feature>
<dbReference type="EMBL" id="AJ133852">
    <property type="protein sequence ID" value="CAB39727.1"/>
    <property type="molecule type" value="mRNA"/>
</dbReference>
<dbReference type="EMBL" id="AY045760">
    <property type="protein sequence ID" value="AAK84942.1"/>
    <property type="molecule type" value="Genomic_DNA"/>
</dbReference>
<dbReference type="EMBL" id="Y17703">
    <property type="protein sequence ID" value="CAA76823.1"/>
    <property type="molecule type" value="mRNA"/>
</dbReference>
<dbReference type="SMR" id="Q9UB30"/>
<dbReference type="VEuPathDB" id="VectorBase:AGAMI1_009129"/>
<dbReference type="VEuPathDB" id="VectorBase:AGAP008284"/>
<dbReference type="HOGENOM" id="CLU_1612198_0_0_1"/>
<dbReference type="Proteomes" id="UP000007062">
    <property type="component" value="Unplaced"/>
</dbReference>
<dbReference type="GO" id="GO:0005576">
    <property type="term" value="C:extracellular region"/>
    <property type="evidence" value="ECO:0007669"/>
    <property type="project" value="UniProtKB-SubCell"/>
</dbReference>
<dbReference type="GO" id="GO:0005549">
    <property type="term" value="F:odorant binding"/>
    <property type="evidence" value="ECO:0007669"/>
    <property type="project" value="InterPro"/>
</dbReference>
<dbReference type="GO" id="GO:0090729">
    <property type="term" value="F:toxin activity"/>
    <property type="evidence" value="ECO:0007669"/>
    <property type="project" value="UniProtKB-KW"/>
</dbReference>
<dbReference type="CDD" id="cd23992">
    <property type="entry name" value="PBP_GOBP"/>
    <property type="match status" value="1"/>
</dbReference>
<dbReference type="FunFam" id="1.10.238.20:FF:000008">
    <property type="entry name" value="D7-related 4 protein"/>
    <property type="match status" value="1"/>
</dbReference>
<dbReference type="Gene3D" id="1.10.238.20">
    <property type="entry name" value="Pheromone/general odorant binding protein domain"/>
    <property type="match status" value="1"/>
</dbReference>
<dbReference type="InterPro" id="IPR006170">
    <property type="entry name" value="PBP/GOBP"/>
</dbReference>
<dbReference type="InterPro" id="IPR036728">
    <property type="entry name" value="PBP_GOBP_sf"/>
</dbReference>
<dbReference type="Pfam" id="PF01395">
    <property type="entry name" value="PBP_GOBP"/>
    <property type="match status" value="1"/>
</dbReference>
<dbReference type="SMART" id="SM00708">
    <property type="entry name" value="PhBP"/>
    <property type="match status" value="1"/>
</dbReference>
<dbReference type="SUPFAM" id="SSF47565">
    <property type="entry name" value="Insect pheromone/odorant-binding proteins"/>
    <property type="match status" value="1"/>
</dbReference>
<comment type="function">
    <text evidence="1 5">Modulates blood feeding of female mosquitoes on vertebrate species by binding and sequestering different mediators involved in the host response (By similarity). Binds serotonin and histamine (PubMed:16301315). Increases blood clotting time (PubMed:16301315).</text>
</comment>
<comment type="subcellular location">
    <subcellularLocation>
        <location evidence="9">Secreted</location>
    </subcellularLocation>
</comment>
<comment type="tissue specificity">
    <text evidence="4 6">Female salivary gland (PubMed:9990055). Not detected in female carcass without salivary glands (PubMed:9990055). Not detected in male tissues (PubMed:11841502, PubMed:9990055).</text>
</comment>
<comment type="developmental stage">
    <text evidence="4">Not detected in embryo, larval and pupal stages.</text>
</comment>
<comment type="similarity">
    <text evidence="9">Belongs to the PBP/GOBP family.</text>
</comment>
<accession>Q9UB30</accession>
<accession>O97414</accession>
<reference evidence="10 12" key="1">
    <citation type="journal article" date="2002" name="Insect Mol. Biol.">
        <title>A cluster of four D7-related genes is expressed in the salivary glands of the African malaria vector Anopheles gambiae.</title>
        <authorList>
            <person name="Arca' B."/>
            <person name="Lombardo F."/>
            <person name="Lanfrancotti A."/>
            <person name="Spanos L."/>
            <person name="Veneri M."/>
            <person name="Louis C."/>
            <person name="Coluzzi M."/>
        </authorList>
    </citation>
    <scope>NUCLEOTIDE SEQUENCE [GENOMIC DNA / MRNA]</scope>
    <scope>TISSUE SPECIFICITY</scope>
    <scope>DEVELOPMENTAL STAGE</scope>
    <source>
        <strain evidence="12">Gasua</strain>
    </source>
</reference>
<reference evidence="11" key="2">
    <citation type="journal article" date="1999" name="Proc. Natl. Acad. Sci. U.S.A.">
        <title>Trapping cDNAs encoding secreted proteins from the salivary glands of the malaria vector Anopheles gambiae.</title>
        <authorList>
            <person name="Arca B."/>
            <person name="Lombardo F."/>
            <person name="de Lara Capurro M."/>
            <person name="della Torre A."/>
            <person name="Dimopoulos G."/>
            <person name="James A.A."/>
            <person name="Coluzzi M."/>
        </authorList>
    </citation>
    <scope>NUCLEOTIDE SEQUENCE [MRNA] OF 1-111</scope>
    <scope>TISSUE SPECIFICITY</scope>
    <source>
        <strain evidence="11">Gasua</strain>
    </source>
</reference>
<reference evidence="9" key="3">
    <citation type="journal article" date="2006" name="J. Biol. Chem.">
        <title>Function and evolution of a mosquito salivary protein family.</title>
        <authorList>
            <person name="Calvo E."/>
            <person name="Mans B.J."/>
            <person name="Andersen J.F."/>
            <person name="Ribeiro J.M."/>
        </authorList>
    </citation>
    <scope>FUNCTION</scope>
    <source>
        <strain evidence="7">Giles</strain>
    </source>
</reference>
<organism evidence="12">
    <name type="scientific">Anopheles gambiae</name>
    <name type="common">African malaria mosquito</name>
    <dbReference type="NCBI Taxonomy" id="7165"/>
    <lineage>
        <taxon>Eukaryota</taxon>
        <taxon>Metazoa</taxon>
        <taxon>Ecdysozoa</taxon>
        <taxon>Arthropoda</taxon>
        <taxon>Hexapoda</taxon>
        <taxon>Insecta</taxon>
        <taxon>Pterygota</taxon>
        <taxon>Neoptera</taxon>
        <taxon>Endopterygota</taxon>
        <taxon>Diptera</taxon>
        <taxon>Nematocera</taxon>
        <taxon>Culicoidea</taxon>
        <taxon>Culicidae</taxon>
        <taxon>Anophelinae</taxon>
        <taxon>Anopheles</taxon>
    </lineage>
</organism>
<protein>
    <recommendedName>
        <fullName evidence="9">Short form salivary protein D7R1</fullName>
    </recommendedName>
    <alternativeName>
        <fullName evidence="12">D7-related 1 protein</fullName>
    </alternativeName>
</protein>
<gene>
    <name evidence="8" type="primary">D7r1</name>
</gene>
<keyword id="KW-1203">Blood coagulation cascade inhibiting toxin</keyword>
<keyword id="KW-1015">Disulfide bond</keyword>
<keyword id="KW-1199">Hemostasis impairing toxin</keyword>
<keyword id="KW-1185">Reference proteome</keyword>
<keyword id="KW-0964">Secreted</keyword>
<keyword id="KW-0732">Signal</keyword>
<keyword id="KW-0800">Toxin</keyword>